<reference key="1">
    <citation type="journal article" date="2007" name="J. Bacteriol.">
        <title>The genome sequence of avian pathogenic Escherichia coli strain O1:K1:H7 shares strong similarities with human extraintestinal pathogenic E. coli genomes.</title>
        <authorList>
            <person name="Johnson T.J."/>
            <person name="Kariyawasam S."/>
            <person name="Wannemuehler Y."/>
            <person name="Mangiamele P."/>
            <person name="Johnson S.J."/>
            <person name="Doetkott C."/>
            <person name="Skyberg J.A."/>
            <person name="Lynne A.M."/>
            <person name="Johnson J.R."/>
            <person name="Nolan L.K."/>
        </authorList>
    </citation>
    <scope>NUCLEOTIDE SEQUENCE [LARGE SCALE GENOMIC DNA]</scope>
</reference>
<name>ARNA_ECOK1</name>
<sequence>MKTVVFAYHDMGCLGIEALLAAGYEISAIFTHTDNPGEKAFYGSVARLAAERGIPVYAPDNVNHPLWVERIAQLSPEVIFSFYYRHLICDEILQLAPRGAFNLHGSLLPKYRGRAPLNWVLVNGETETGVTLHRMVKRADAGAIVAQLRVAIAPDDIAITLHHKLCHAARQLLEQTLPAIKHGNILEIAQRENEATCFGRRTPDDSFLEWHKSASVLHNMVRAVADPWPGAFSYVGNQKFTVWSSRVHPHASKAQPGSVISVAPLLIACGDGALEIVTGQAGDGITMQGSQLAQTLGLVQGSRLNSQPACAARRRTRVLILGVNGFIGNHLTERLLREDHYEVYGLDIGSDAISRFLNHPHFHFVEGDISIHSEWIEYHVKKCDVVLPLVAIATPIEYTRNPLRVFELDFEENLRIIRYCVKYRKRIIFPSTSEVYGMCSDKYFDEDHSNLIVGPVNKPRWIYSVSKQLLDRVIWAYGEKEGLQFTLFRPFNWMGPRLDNLNAARIGSSRAITQLILNLVEGSPIKLIDGGKQKRCFTDIRDGIEALYRIIENAGNRCDGEIINIGNPENEASIEELGEMLLASFEKHPLRHYFPPFAGFRVVESSSYYGKGYQDVEHRKPSIRNARRCLNWEPKIDMQETIDETLDFFLRTVDLTDKPS</sequence>
<evidence type="ECO:0000255" key="1">
    <source>
        <dbReference type="HAMAP-Rule" id="MF_01166"/>
    </source>
</evidence>
<accession>A1ADA7</accession>
<organism>
    <name type="scientific">Escherichia coli O1:K1 / APEC</name>
    <dbReference type="NCBI Taxonomy" id="405955"/>
    <lineage>
        <taxon>Bacteria</taxon>
        <taxon>Pseudomonadati</taxon>
        <taxon>Pseudomonadota</taxon>
        <taxon>Gammaproteobacteria</taxon>
        <taxon>Enterobacterales</taxon>
        <taxon>Enterobacteriaceae</taxon>
        <taxon>Escherichia</taxon>
    </lineage>
</organism>
<dbReference type="EC" id="2.1.2.13" evidence="1"/>
<dbReference type="EC" id="1.1.1.305" evidence="1"/>
<dbReference type="EMBL" id="CP000468">
    <property type="protein sequence ID" value="ABJ01647.1"/>
    <property type="molecule type" value="Genomic_DNA"/>
</dbReference>
<dbReference type="RefSeq" id="WP_000860295.1">
    <property type="nucleotide sequence ID" value="NZ_CADILS010000004.1"/>
</dbReference>
<dbReference type="SMR" id="A1ADA7"/>
<dbReference type="KEGG" id="ecv:APECO1_4306"/>
<dbReference type="HOGENOM" id="CLU_007383_23_2_6"/>
<dbReference type="UniPathway" id="UPA00030"/>
<dbReference type="UniPathway" id="UPA00032">
    <property type="reaction ID" value="UER00492"/>
</dbReference>
<dbReference type="UniPathway" id="UPA00032">
    <property type="reaction ID" value="UER00494"/>
</dbReference>
<dbReference type="Proteomes" id="UP000008216">
    <property type="component" value="Chromosome"/>
</dbReference>
<dbReference type="GO" id="GO:0016020">
    <property type="term" value="C:membrane"/>
    <property type="evidence" value="ECO:0007669"/>
    <property type="project" value="GOC"/>
</dbReference>
<dbReference type="GO" id="GO:0016831">
    <property type="term" value="F:carboxy-lyase activity"/>
    <property type="evidence" value="ECO:0007669"/>
    <property type="project" value="InterPro"/>
</dbReference>
<dbReference type="GO" id="GO:0099619">
    <property type="term" value="F:UDP-4-amino-4-deoxy-L-arabinose formyltransferase activity"/>
    <property type="evidence" value="ECO:0007669"/>
    <property type="project" value="UniProtKB-EC"/>
</dbReference>
<dbReference type="GO" id="GO:0099618">
    <property type="term" value="F:UDP-glucuronate dehydrogenase activity"/>
    <property type="evidence" value="ECO:0007669"/>
    <property type="project" value="UniProtKB-EC"/>
</dbReference>
<dbReference type="GO" id="GO:0009245">
    <property type="term" value="P:lipid A biosynthetic process"/>
    <property type="evidence" value="ECO:0007669"/>
    <property type="project" value="UniProtKB-KW"/>
</dbReference>
<dbReference type="GO" id="GO:0009103">
    <property type="term" value="P:lipopolysaccharide biosynthetic process"/>
    <property type="evidence" value="ECO:0007669"/>
    <property type="project" value="UniProtKB-UniRule"/>
</dbReference>
<dbReference type="GO" id="GO:0046677">
    <property type="term" value="P:response to antibiotic"/>
    <property type="evidence" value="ECO:0007669"/>
    <property type="project" value="UniProtKB-KW"/>
</dbReference>
<dbReference type="CDD" id="cd08702">
    <property type="entry name" value="Arna_FMT_C"/>
    <property type="match status" value="1"/>
</dbReference>
<dbReference type="CDD" id="cd05257">
    <property type="entry name" value="Arna_like_SDR_e"/>
    <property type="match status" value="1"/>
</dbReference>
<dbReference type="CDD" id="cd08644">
    <property type="entry name" value="FMT_core_ArnA_N"/>
    <property type="match status" value="1"/>
</dbReference>
<dbReference type="FunFam" id="3.40.50.12230:FF:000002">
    <property type="entry name" value="Bifunctional polymyxin resistance protein ArnA"/>
    <property type="match status" value="1"/>
</dbReference>
<dbReference type="FunFam" id="3.40.50.720:FF:000197">
    <property type="entry name" value="Bifunctional polymyxin resistance protein ArnA"/>
    <property type="match status" value="1"/>
</dbReference>
<dbReference type="Gene3D" id="3.40.50.12230">
    <property type="match status" value="1"/>
</dbReference>
<dbReference type="Gene3D" id="3.40.50.720">
    <property type="entry name" value="NAD(P)-binding Rossmann-like Domain"/>
    <property type="match status" value="1"/>
</dbReference>
<dbReference type="HAMAP" id="MF_01166">
    <property type="entry name" value="ArnA"/>
    <property type="match status" value="1"/>
</dbReference>
<dbReference type="InterPro" id="IPR045869">
    <property type="entry name" value="Arna-like_SDR_e"/>
</dbReference>
<dbReference type="InterPro" id="IPR021168">
    <property type="entry name" value="Bifun_polymyxin_resist_ArnA"/>
</dbReference>
<dbReference type="InterPro" id="IPR001509">
    <property type="entry name" value="Epimerase_deHydtase"/>
</dbReference>
<dbReference type="InterPro" id="IPR005793">
    <property type="entry name" value="Formyl_trans_C"/>
</dbReference>
<dbReference type="InterPro" id="IPR002376">
    <property type="entry name" value="Formyl_transf_N"/>
</dbReference>
<dbReference type="InterPro" id="IPR036477">
    <property type="entry name" value="Formyl_transf_N_sf"/>
</dbReference>
<dbReference type="InterPro" id="IPR011034">
    <property type="entry name" value="Formyl_transferase-like_C_sf"/>
</dbReference>
<dbReference type="InterPro" id="IPR050177">
    <property type="entry name" value="Lipid_A_modif_metabolic_enz"/>
</dbReference>
<dbReference type="InterPro" id="IPR036291">
    <property type="entry name" value="NAD(P)-bd_dom_sf"/>
</dbReference>
<dbReference type="NCBIfam" id="NF005414">
    <property type="entry name" value="PRK06988.1"/>
    <property type="match status" value="1"/>
</dbReference>
<dbReference type="NCBIfam" id="NF005998">
    <property type="entry name" value="PRK08125.1"/>
    <property type="match status" value="1"/>
</dbReference>
<dbReference type="NCBIfam" id="NF008872">
    <property type="entry name" value="PRK11908.1"/>
    <property type="match status" value="1"/>
</dbReference>
<dbReference type="PANTHER" id="PTHR43245">
    <property type="entry name" value="BIFUNCTIONAL POLYMYXIN RESISTANCE PROTEIN ARNA"/>
    <property type="match status" value="1"/>
</dbReference>
<dbReference type="PANTHER" id="PTHR43245:SF13">
    <property type="entry name" value="UDP-D-APIOSE_UDP-D-XYLOSE SYNTHASE 2"/>
    <property type="match status" value="1"/>
</dbReference>
<dbReference type="Pfam" id="PF01370">
    <property type="entry name" value="Epimerase"/>
    <property type="match status" value="1"/>
</dbReference>
<dbReference type="Pfam" id="PF02911">
    <property type="entry name" value="Formyl_trans_C"/>
    <property type="match status" value="1"/>
</dbReference>
<dbReference type="Pfam" id="PF00551">
    <property type="entry name" value="Formyl_trans_N"/>
    <property type="match status" value="1"/>
</dbReference>
<dbReference type="PIRSF" id="PIRSF036506">
    <property type="entry name" value="Bifun_polymyxin_resist_ArnA"/>
    <property type="match status" value="1"/>
</dbReference>
<dbReference type="SUPFAM" id="SSF50486">
    <property type="entry name" value="FMT C-terminal domain-like"/>
    <property type="match status" value="1"/>
</dbReference>
<dbReference type="SUPFAM" id="SSF53328">
    <property type="entry name" value="Formyltransferase"/>
    <property type="match status" value="1"/>
</dbReference>
<dbReference type="SUPFAM" id="SSF51735">
    <property type="entry name" value="NAD(P)-binding Rossmann-fold domains"/>
    <property type="match status" value="1"/>
</dbReference>
<feature type="chain" id="PRO_0000281723" description="Bifunctional polymyxin resistance protein ArnA">
    <location>
        <begin position="1"/>
        <end position="660"/>
    </location>
</feature>
<feature type="region of interest" description="Formyltransferase ArnAFT">
    <location>
        <begin position="1"/>
        <end position="304"/>
    </location>
</feature>
<feature type="region of interest" description="Dehydrogenase ArnADH">
    <location>
        <begin position="314"/>
        <end position="660"/>
    </location>
</feature>
<feature type="active site" description="Proton donor; for formyltransferase activity" evidence="1">
    <location>
        <position position="104"/>
    </location>
</feature>
<feature type="active site" description="Proton acceptor; for decarboxylase activity" evidence="1">
    <location>
        <position position="434"/>
    </location>
</feature>
<feature type="active site" description="Proton donor; for decarboxylase activity" evidence="1">
    <location>
        <position position="619"/>
    </location>
</feature>
<feature type="binding site" evidence="1">
    <location>
        <begin position="86"/>
        <end position="88"/>
    </location>
    <ligand>
        <name>(6R)-10-formyltetrahydrofolate</name>
        <dbReference type="ChEBI" id="CHEBI:195366"/>
    </ligand>
</feature>
<feature type="binding site" evidence="1">
    <location>
        <position position="114"/>
    </location>
    <ligand>
        <name>(6R)-10-formyltetrahydrofolate</name>
        <dbReference type="ChEBI" id="CHEBI:195366"/>
    </ligand>
</feature>
<feature type="binding site" evidence="1">
    <location>
        <begin position="136"/>
        <end position="140"/>
    </location>
    <ligand>
        <name>(6R)-10-formyltetrahydrofolate</name>
        <dbReference type="ChEBI" id="CHEBI:195366"/>
    </ligand>
</feature>
<feature type="binding site" evidence="1">
    <location>
        <position position="347"/>
    </location>
    <ligand>
        <name>NAD(+)</name>
        <dbReference type="ChEBI" id="CHEBI:57540"/>
    </ligand>
</feature>
<feature type="binding site" evidence="1">
    <location>
        <begin position="368"/>
        <end position="369"/>
    </location>
    <ligand>
        <name>NAD(+)</name>
        <dbReference type="ChEBI" id="CHEBI:57540"/>
    </ligand>
</feature>
<feature type="binding site" evidence="1">
    <location>
        <position position="393"/>
    </location>
    <ligand>
        <name>UDP-alpha-D-glucuronate</name>
        <dbReference type="ChEBI" id="CHEBI:58052"/>
    </ligand>
</feature>
<feature type="binding site" evidence="1">
    <location>
        <position position="398"/>
    </location>
    <ligand>
        <name>UDP-alpha-D-glucuronate</name>
        <dbReference type="ChEBI" id="CHEBI:58052"/>
    </ligand>
</feature>
<feature type="binding site" evidence="1">
    <location>
        <begin position="432"/>
        <end position="433"/>
    </location>
    <ligand>
        <name>UDP-alpha-D-glucuronate</name>
        <dbReference type="ChEBI" id="CHEBI:58052"/>
    </ligand>
</feature>
<feature type="binding site" evidence="1">
    <location>
        <position position="460"/>
    </location>
    <ligand>
        <name>UDP-alpha-D-glucuronate</name>
        <dbReference type="ChEBI" id="CHEBI:58052"/>
    </ligand>
</feature>
<feature type="binding site" evidence="1">
    <location>
        <position position="492"/>
    </location>
    <ligand>
        <name>UDP-alpha-D-glucuronate</name>
        <dbReference type="ChEBI" id="CHEBI:58052"/>
    </ligand>
</feature>
<feature type="binding site" evidence="1">
    <location>
        <begin position="526"/>
        <end position="535"/>
    </location>
    <ligand>
        <name>UDP-alpha-D-glucuronate</name>
        <dbReference type="ChEBI" id="CHEBI:58052"/>
    </ligand>
</feature>
<feature type="binding site" evidence="1">
    <location>
        <position position="613"/>
    </location>
    <ligand>
        <name>UDP-alpha-D-glucuronate</name>
        <dbReference type="ChEBI" id="CHEBI:58052"/>
    </ligand>
</feature>
<feature type="site" description="Transition state stabilizer" evidence="1">
    <location>
        <position position="102"/>
    </location>
</feature>
<feature type="site" description="Raises pKa of active site His" evidence="1">
    <location>
        <position position="140"/>
    </location>
</feature>
<proteinExistence type="inferred from homology"/>
<keyword id="KW-0046">Antibiotic resistance</keyword>
<keyword id="KW-0441">Lipid A biosynthesis</keyword>
<keyword id="KW-0444">Lipid biosynthesis</keyword>
<keyword id="KW-0443">Lipid metabolism</keyword>
<keyword id="KW-0448">Lipopolysaccharide biosynthesis</keyword>
<keyword id="KW-0511">Multifunctional enzyme</keyword>
<keyword id="KW-0520">NAD</keyword>
<keyword id="KW-0560">Oxidoreductase</keyword>
<keyword id="KW-1185">Reference proteome</keyword>
<keyword id="KW-0808">Transferase</keyword>
<gene>
    <name evidence="1" type="primary">arnA</name>
    <name type="ordered locus">Ecok1_21530</name>
    <name type="ORF">APECO1_4306</name>
</gene>
<protein>
    <recommendedName>
        <fullName evidence="1">Bifunctional polymyxin resistance protein ArnA</fullName>
    </recommendedName>
    <domain>
        <recommendedName>
            <fullName evidence="1">UDP-4-amino-4-deoxy-L-arabinose formyltransferase</fullName>
            <ecNumber evidence="1">2.1.2.13</ecNumber>
        </recommendedName>
        <alternativeName>
            <fullName evidence="1">ArnAFT</fullName>
        </alternativeName>
        <alternativeName>
            <fullName evidence="1">UDP-L-Ara4N formyltransferase</fullName>
        </alternativeName>
    </domain>
    <domain>
        <recommendedName>
            <fullName evidence="1">UDP-glucuronic acid oxidase, UDP-4-keto-hexauronic acid decarboxylating</fullName>
            <ecNumber evidence="1">1.1.1.305</ecNumber>
        </recommendedName>
        <alternativeName>
            <fullName evidence="1">ArnADH</fullName>
        </alternativeName>
        <alternativeName>
            <fullName evidence="1">UDP-GlcUA decarboxylase</fullName>
        </alternativeName>
        <alternativeName>
            <fullName evidence="1">UDP-glucuronic acid dehydrogenase</fullName>
        </alternativeName>
    </domain>
</protein>
<comment type="function">
    <text evidence="1">Bifunctional enzyme that catalyzes the oxidative decarboxylation of UDP-glucuronic acid (UDP-GlcUA) to UDP-4-keto-arabinose (UDP-Ara4O) and the addition of a formyl group to UDP-4-amino-4-deoxy-L-arabinose (UDP-L-Ara4N) to form UDP-L-4-formamido-arabinose (UDP-L-Ara4FN). The modified arabinose is attached to lipid A and is required for resistance to polymyxin and cationic antimicrobial peptides.</text>
</comment>
<comment type="catalytic activity">
    <reaction evidence="1">
        <text>UDP-alpha-D-glucuronate + NAD(+) = UDP-beta-L-threo-pentopyranos-4-ulose + CO2 + NADH</text>
        <dbReference type="Rhea" id="RHEA:24702"/>
        <dbReference type="ChEBI" id="CHEBI:16526"/>
        <dbReference type="ChEBI" id="CHEBI:57540"/>
        <dbReference type="ChEBI" id="CHEBI:57945"/>
        <dbReference type="ChEBI" id="CHEBI:58052"/>
        <dbReference type="ChEBI" id="CHEBI:58710"/>
        <dbReference type="EC" id="1.1.1.305"/>
    </reaction>
</comment>
<comment type="catalytic activity">
    <reaction evidence="1">
        <text>UDP-4-amino-4-deoxy-beta-L-arabinose + (6R)-10-formyltetrahydrofolate = UDP-4-deoxy-4-formamido-beta-L-arabinose + (6S)-5,6,7,8-tetrahydrofolate + H(+)</text>
        <dbReference type="Rhea" id="RHEA:24706"/>
        <dbReference type="ChEBI" id="CHEBI:15378"/>
        <dbReference type="ChEBI" id="CHEBI:57453"/>
        <dbReference type="ChEBI" id="CHEBI:58708"/>
        <dbReference type="ChEBI" id="CHEBI:58709"/>
        <dbReference type="ChEBI" id="CHEBI:195366"/>
        <dbReference type="EC" id="2.1.2.13"/>
    </reaction>
</comment>
<comment type="pathway">
    <text evidence="1">Nucleotide-sugar biosynthesis; UDP-4-deoxy-4-formamido-beta-L-arabinose biosynthesis; UDP-4-deoxy-4-formamido-beta-L-arabinose from UDP-alpha-D-glucuronate: step 1/3.</text>
</comment>
<comment type="pathway">
    <text evidence="1">Nucleotide-sugar biosynthesis; UDP-4-deoxy-4-formamido-beta-L-arabinose biosynthesis; UDP-4-deoxy-4-formamido-beta-L-arabinose from UDP-alpha-D-glucuronate: step 3/3.</text>
</comment>
<comment type="pathway">
    <text evidence="1">Bacterial outer membrane biogenesis; lipopolysaccharide biosynthesis.</text>
</comment>
<comment type="subunit">
    <text evidence="1">Homohexamer, formed by a dimer of trimers.</text>
</comment>
<comment type="similarity">
    <text evidence="1">In the N-terminal section; belongs to the Fmt family. UDP-L-Ara4N formyltransferase subfamily.</text>
</comment>
<comment type="similarity">
    <text evidence="1">In the C-terminal section; belongs to the NAD(P)-dependent epimerase/dehydratase family. UDP-glucuronic acid decarboxylase subfamily.</text>
</comment>